<reference evidence="5" key="1">
    <citation type="journal article" date="2001" name="Proc. Natl. Acad. Sci. U.S.A.">
        <title>Candidate odorant receptors from the malaria vector mosquito Anopheles gambiae and evidence of down-regulation in response to blood feeding.</title>
        <authorList>
            <person name="Fox A.N."/>
            <person name="Pitts R.J."/>
            <person name="Robertson H.M."/>
            <person name="Carlson J.R."/>
            <person name="Zwiebel L.J."/>
        </authorList>
    </citation>
    <scope>NUCLEOTIDE SEQUENCE [GENOMIC DNA]</scope>
    <scope>FUNCTION</scope>
    <scope>INDUCTION</scope>
    <scope>TISSUE SPECIFICITY</scope>
    <source>
        <strain evidence="2">G3</strain>
    </source>
</reference>
<reference key="2">
    <citation type="journal article" date="2002" name="Science">
        <title>The genome sequence of the malaria mosquito Anopheles gambiae.</title>
        <authorList>
            <person name="Holt R.A."/>
            <person name="Subramanian G.M."/>
            <person name="Halpern A."/>
            <person name="Sutton G.G."/>
            <person name="Charlab R."/>
            <person name="Nusskern D.R."/>
            <person name="Wincker P."/>
            <person name="Clark A.G."/>
            <person name="Ribeiro J.M.C."/>
            <person name="Wides R."/>
            <person name="Salzberg S.L."/>
            <person name="Loftus B.J."/>
            <person name="Yandell M.D."/>
            <person name="Majoros W.H."/>
            <person name="Rusch D.B."/>
            <person name="Lai Z."/>
            <person name="Kraft C.L."/>
            <person name="Abril J.F."/>
            <person name="Anthouard V."/>
            <person name="Arensburger P."/>
            <person name="Atkinson P.W."/>
            <person name="Baden H."/>
            <person name="de Berardinis V."/>
            <person name="Baldwin D."/>
            <person name="Benes V."/>
            <person name="Biedler J."/>
            <person name="Blass C."/>
            <person name="Bolanos R."/>
            <person name="Boscus D."/>
            <person name="Barnstead M."/>
            <person name="Cai S."/>
            <person name="Center A."/>
            <person name="Chaturverdi K."/>
            <person name="Christophides G.K."/>
            <person name="Chrystal M.A.M."/>
            <person name="Clamp M."/>
            <person name="Cravchik A."/>
            <person name="Curwen V."/>
            <person name="Dana A."/>
            <person name="Delcher A."/>
            <person name="Dew I."/>
            <person name="Evans C.A."/>
            <person name="Flanigan M."/>
            <person name="Grundschober-Freimoser A."/>
            <person name="Friedli L."/>
            <person name="Gu Z."/>
            <person name="Guan P."/>
            <person name="Guigo R."/>
            <person name="Hillenmeyer M.E."/>
            <person name="Hladun S.L."/>
            <person name="Hogan J.R."/>
            <person name="Hong Y.S."/>
            <person name="Hoover J."/>
            <person name="Jaillon O."/>
            <person name="Ke Z."/>
            <person name="Kodira C.D."/>
            <person name="Kokoza E."/>
            <person name="Koutsos A."/>
            <person name="Letunic I."/>
            <person name="Levitsky A.A."/>
            <person name="Liang Y."/>
            <person name="Lin J.-J."/>
            <person name="Lobo N.F."/>
            <person name="Lopez J.R."/>
            <person name="Malek J.A."/>
            <person name="McIntosh T.C."/>
            <person name="Meister S."/>
            <person name="Miller J.R."/>
            <person name="Mobarry C."/>
            <person name="Mongin E."/>
            <person name="Murphy S.D."/>
            <person name="O'Brochta D.A."/>
            <person name="Pfannkoch C."/>
            <person name="Qi R."/>
            <person name="Regier M.A."/>
            <person name="Remington K."/>
            <person name="Shao H."/>
            <person name="Sharakhova M.V."/>
            <person name="Sitter C.D."/>
            <person name="Shetty J."/>
            <person name="Smith T.J."/>
            <person name="Strong R."/>
            <person name="Sun J."/>
            <person name="Thomasova D."/>
            <person name="Ton L.Q."/>
            <person name="Topalis P."/>
            <person name="Tu Z.J."/>
            <person name="Unger M.F."/>
            <person name="Walenz B."/>
            <person name="Wang A.H."/>
            <person name="Wang J."/>
            <person name="Wang M."/>
            <person name="Wang X."/>
            <person name="Woodford K.J."/>
            <person name="Wortman J.R."/>
            <person name="Wu M."/>
            <person name="Yao A."/>
            <person name="Zdobnov E.M."/>
            <person name="Zhang H."/>
            <person name="Zhao Q."/>
            <person name="Zhao S."/>
            <person name="Zhu S.C."/>
            <person name="Zhimulev I."/>
            <person name="Coluzzi M."/>
            <person name="della Torre A."/>
            <person name="Roth C.W."/>
            <person name="Louis C."/>
            <person name="Kalush F."/>
            <person name="Mural R.J."/>
            <person name="Myers E.W."/>
            <person name="Adams M.D."/>
            <person name="Smith H.O."/>
            <person name="Broder S."/>
            <person name="Gardner M.J."/>
            <person name="Fraser C.M."/>
            <person name="Birney E."/>
            <person name="Bork P."/>
            <person name="Brey P.T."/>
            <person name="Venter J.C."/>
            <person name="Weissenbach J."/>
            <person name="Kafatos F.C."/>
            <person name="Collins F.H."/>
            <person name="Hoffman S.L."/>
        </authorList>
    </citation>
    <scope>NUCLEOTIDE SEQUENCE [LARGE SCALE GENOMIC DNA]</scope>
    <source>
        <strain>PEST</strain>
    </source>
</reference>
<reference key="3">
    <citation type="journal article" date="2004" name="Am. J. Trop. Med. Hyg.">
        <title>Intraspecific nucleotide variation in Anopheles gambiae: new insights into the biology of malaria vectors.</title>
        <authorList>
            <person name="Morlais I."/>
            <person name="Poncon N."/>
            <person name="Simard F."/>
            <person name="Cohuet A."/>
            <person name="Fontenille D."/>
        </authorList>
    </citation>
    <scope>NUCLEOTIDE SEQUENCE [GENOMIC DNA] OF 35-236</scope>
    <source>
        <strain>4aRR</strain>
        <strain>L3-5</strain>
        <strain>Yaounde</strain>
    </source>
</reference>
<reference evidence="5" key="4">
    <citation type="journal article" date="2004" name="Nature">
        <title>Olfaction: mosquito receptor for human-sweat odorant.</title>
        <authorList>
            <person name="Hallem E.A."/>
            <person name="Fox A.N."/>
            <person name="Zwiebel L.J."/>
            <person name="Carlson J.R."/>
        </authorList>
    </citation>
    <scope>FUNCTION</scope>
    <scope>INDUCTION</scope>
</reference>
<reference evidence="5" key="5">
    <citation type="journal article" date="2002" name="Science">
        <title>G protein-coupled receptors in Anopheles gambiae.</title>
        <authorList>
            <person name="Hill C.A."/>
            <person name="Fox A.N."/>
            <person name="Pitts R.J."/>
            <person name="Kent L.B."/>
            <person name="Tan P.L."/>
            <person name="Chrystal M.A."/>
            <person name="Cravchik A."/>
            <person name="Collins F.H."/>
            <person name="Robertson H.M."/>
            <person name="Zwiebel L.J."/>
        </authorList>
    </citation>
    <scope>IDENTIFICATION</scope>
    <scope>TISSUE SPECIFICITY</scope>
</reference>
<accession>Q8WTE7</accession>
<accession>Q6VPM5</accession>
<accession>Q7Q1T3</accession>
<organism evidence="6">
    <name type="scientific">Anopheles gambiae</name>
    <name type="common">African malaria mosquito</name>
    <dbReference type="NCBI Taxonomy" id="7165"/>
    <lineage>
        <taxon>Eukaryota</taxon>
        <taxon>Metazoa</taxon>
        <taxon>Ecdysozoa</taxon>
        <taxon>Arthropoda</taxon>
        <taxon>Hexapoda</taxon>
        <taxon>Insecta</taxon>
        <taxon>Pterygota</taxon>
        <taxon>Neoptera</taxon>
        <taxon>Endopterygota</taxon>
        <taxon>Diptera</taxon>
        <taxon>Nematocera</taxon>
        <taxon>Culicoidea</taxon>
        <taxon>Culicidae</taxon>
        <taxon>Anophelinae</taxon>
        <taxon>Anopheles</taxon>
    </lineage>
</organism>
<protein>
    <recommendedName>
        <fullName>Odorant receptor Or1</fullName>
    </recommendedName>
    <alternativeName>
        <fullName>AgOr1</fullName>
    </alternativeName>
</protein>
<comment type="function">
    <text evidence="2 4">Odorant receptor which plays a critical role in the anthropophilic host-seeking behavior; establishes the host preference to transmit malaria. May participate in the phenomenon of decreased host-seeking behavior in disease vector mosquitoes after blood feeding.</text>
</comment>
<comment type="subcellular location">
    <subcellularLocation>
        <location evidence="5">Cell membrane</location>
        <topology evidence="5">Multi-pass membrane protein</topology>
    </subcellularLocation>
</comment>
<comment type="tissue specificity">
    <text evidence="2 3">Female-specific antennae and maxillary palp expression.</text>
</comment>
<comment type="induction">
    <text evidence="2 4">Strong response to the odorant 4-methylphenol, a component of human sweat, when expressed in odorant receptor deficient Drosophila. In vivo, decreased expression in antennae after a blood meal.</text>
</comment>
<comment type="similarity">
    <text evidence="5">Belongs to the insect chemoreceptor superfamily. Heteromeric odorant receptor channel (TC 1.A.69) family. Or2a subfamily.</text>
</comment>
<comment type="online information" name="Protein Spotlight">
    <link uri="https://www.proteinspotlight.org/back_issues/044"/>
    <text>What mosquitoes sniff - Issue 44 of March 2004</text>
</comment>
<sequence>MKLNKLNPRWDAYDRRDSFWLQLLCLKYLGLWPPEDTDQATRNRYIAYGWALRIMFLHLYALTQALYFKDVKDINDIANALFVLMTQVTLIYKLEKFNYNIARIQACLRKLNCTLYHPKQREEFSPVLQSMSGVFWLMIFLMFVAIFTIIMWVMSPAFDNERRLPVPAWFPVDYHHSDIVYGVLFLYQTIGIVMSATYNFSTDTMFSGLMLHINGQIVRLGSMVKKLGHDVPPERQLVATDAEWKEMRKRIDHHSKVYGTMYAKVTECVLFHKDILSFGDEVQDIFQGSIFAQVCASVIIICMTLLQATGDDVTMADLLGCGFYLLVMTSQVFIFCYVGNEISYTTDKFTEFVGFSNYFKFDKRTSQAMIFFLQMTLKDVHIKVGSVLKVTLNLHTFLQIMKLSYSYLAVLQSMESE</sequence>
<evidence type="ECO:0000255" key="1"/>
<evidence type="ECO:0000269" key="2">
    <source>
    </source>
</evidence>
<evidence type="ECO:0000269" key="3">
    <source>
    </source>
</evidence>
<evidence type="ECO:0000269" key="4">
    <source>
    </source>
</evidence>
<evidence type="ECO:0000305" key="5"/>
<evidence type="ECO:0000312" key="6">
    <source>
        <dbReference type="EMBL" id="AAL35506.1"/>
    </source>
</evidence>
<name>OR1_ANOGA</name>
<proteinExistence type="evidence at transcript level"/>
<keyword id="KW-1003">Cell membrane</keyword>
<keyword id="KW-0325">Glycoprotein</keyword>
<keyword id="KW-0472">Membrane</keyword>
<keyword id="KW-0552">Olfaction</keyword>
<keyword id="KW-0675">Receptor</keyword>
<keyword id="KW-1185">Reference proteome</keyword>
<keyword id="KW-0716">Sensory transduction</keyword>
<keyword id="KW-0807">Transducer</keyword>
<keyword id="KW-0812">Transmembrane</keyword>
<keyword id="KW-1133">Transmembrane helix</keyword>
<dbReference type="EMBL" id="AF364130">
    <property type="protein sequence ID" value="AAL35506.1"/>
    <property type="molecule type" value="Genomic_DNA"/>
</dbReference>
<dbReference type="EMBL" id="AAAB01008980">
    <property type="protein sequence ID" value="EAA13838.1"/>
    <property type="molecule type" value="Genomic_DNA"/>
</dbReference>
<dbReference type="EMBL" id="AY334005">
    <property type="protein sequence ID" value="AAR01130.1"/>
    <property type="molecule type" value="Genomic_DNA"/>
</dbReference>
<dbReference type="EMBL" id="AY334006">
    <property type="protein sequence ID" value="AAR01131.1"/>
    <property type="molecule type" value="Genomic_DNA"/>
</dbReference>
<dbReference type="EMBL" id="AY334007">
    <property type="protein sequence ID" value="AAR01132.1"/>
    <property type="molecule type" value="Genomic_DNA"/>
</dbReference>
<dbReference type="RefSeq" id="XP_318674.1">
    <property type="nucleotide sequence ID" value="XM_318674.1"/>
</dbReference>
<dbReference type="SMR" id="Q8WTE7"/>
<dbReference type="FunCoup" id="Q8WTE7">
    <property type="interactions" value="68"/>
</dbReference>
<dbReference type="STRING" id="7165.Q8WTE7"/>
<dbReference type="GlyCosmos" id="Q8WTE7">
    <property type="glycosylation" value="1 site, No reported glycans"/>
</dbReference>
<dbReference type="PaxDb" id="7165-AGAP009640-PA"/>
<dbReference type="EnsemblMetazoa" id="AGAP009640-RA">
    <property type="protein sequence ID" value="AGAP009640-PA"/>
    <property type="gene ID" value="AGAP009640"/>
</dbReference>
<dbReference type="GeneID" id="1279017"/>
<dbReference type="KEGG" id="aga:1279017"/>
<dbReference type="VEuPathDB" id="VectorBase:AGAMI1_009520"/>
<dbReference type="VEuPathDB" id="VectorBase:AGAP009640"/>
<dbReference type="eggNOG" id="ENOG502TBE3">
    <property type="taxonomic scope" value="Eukaryota"/>
</dbReference>
<dbReference type="InParanoid" id="Q8WTE7"/>
<dbReference type="OMA" id="MIMFGCA"/>
<dbReference type="PhylomeDB" id="Q8WTE7"/>
<dbReference type="Proteomes" id="UP000007062">
    <property type="component" value="Chromosome 3R"/>
</dbReference>
<dbReference type="GO" id="GO:0016020">
    <property type="term" value="C:membrane"/>
    <property type="evidence" value="ECO:0000303"/>
    <property type="project" value="UniProtKB"/>
</dbReference>
<dbReference type="GO" id="GO:0005886">
    <property type="term" value="C:plasma membrane"/>
    <property type="evidence" value="ECO:0000318"/>
    <property type="project" value="GO_Central"/>
</dbReference>
<dbReference type="GO" id="GO:0005549">
    <property type="term" value="F:odorant binding"/>
    <property type="evidence" value="ECO:0000314"/>
    <property type="project" value="UniProtKB"/>
</dbReference>
<dbReference type="GO" id="GO:0004984">
    <property type="term" value="F:olfactory receptor activity"/>
    <property type="evidence" value="ECO:0000314"/>
    <property type="project" value="UniProtKB"/>
</dbReference>
<dbReference type="GO" id="GO:0050911">
    <property type="term" value="P:detection of chemical stimulus involved in sensory perception of smell"/>
    <property type="evidence" value="ECO:0000318"/>
    <property type="project" value="GO_Central"/>
</dbReference>
<dbReference type="GO" id="GO:0042048">
    <property type="term" value="P:olfactory behavior"/>
    <property type="evidence" value="ECO:0000314"/>
    <property type="project" value="UniProtKB"/>
</dbReference>
<dbReference type="GO" id="GO:0007608">
    <property type="term" value="P:sensory perception of smell"/>
    <property type="evidence" value="ECO:0000314"/>
    <property type="project" value="UniProtKB"/>
</dbReference>
<dbReference type="GO" id="GO:0007165">
    <property type="term" value="P:signal transduction"/>
    <property type="evidence" value="ECO:0007669"/>
    <property type="project" value="UniProtKB-KW"/>
</dbReference>
<dbReference type="InterPro" id="IPR004117">
    <property type="entry name" value="7tm6_olfct_rcpt"/>
</dbReference>
<dbReference type="PANTHER" id="PTHR21137">
    <property type="entry name" value="ODORANT RECEPTOR"/>
    <property type="match status" value="1"/>
</dbReference>
<dbReference type="PANTHER" id="PTHR21137:SF35">
    <property type="entry name" value="ODORANT RECEPTOR 19A-RELATED"/>
    <property type="match status" value="1"/>
</dbReference>
<dbReference type="Pfam" id="PF02949">
    <property type="entry name" value="7tm_6"/>
    <property type="match status" value="1"/>
</dbReference>
<gene>
    <name type="primary">OR1</name>
    <name type="ORF">AGAP009640</name>
</gene>
<feature type="chain" id="PRO_0000174286" description="Odorant receptor Or1">
    <location>
        <begin position="1"/>
        <end position="417"/>
    </location>
</feature>
<feature type="topological domain" description="Cytoplasmic" evidence="1">
    <location>
        <begin position="1"/>
        <end position="2"/>
    </location>
</feature>
<feature type="transmembrane region" description="Helical; Name=1" evidence="1">
    <location>
        <begin position="3"/>
        <end position="23"/>
    </location>
</feature>
<feature type="topological domain" description="Extracellular" evidence="1">
    <location>
        <begin position="24"/>
        <end position="45"/>
    </location>
</feature>
<feature type="transmembrane region" description="Helical; Name=2" evidence="1">
    <location>
        <begin position="46"/>
        <end position="66"/>
    </location>
</feature>
<feature type="topological domain" description="Cytoplasmic" evidence="1">
    <location>
        <begin position="67"/>
        <end position="73"/>
    </location>
</feature>
<feature type="transmembrane region" description="Helical; Name=3" evidence="1">
    <location>
        <begin position="74"/>
        <end position="94"/>
    </location>
</feature>
<feature type="topological domain" description="Extracellular" evidence="1">
    <location>
        <begin position="95"/>
        <end position="133"/>
    </location>
</feature>
<feature type="transmembrane region" description="Helical; Name=4" evidence="1">
    <location>
        <begin position="134"/>
        <end position="154"/>
    </location>
</feature>
<feature type="topological domain" description="Cytoplasmic" evidence="1">
    <location>
        <begin position="155"/>
        <end position="178"/>
    </location>
</feature>
<feature type="transmembrane region" description="Helical; Name=5" evidence="1">
    <location>
        <begin position="179"/>
        <end position="199"/>
    </location>
</feature>
<feature type="topological domain" description="Extracellular" evidence="1">
    <location>
        <begin position="200"/>
        <end position="284"/>
    </location>
</feature>
<feature type="transmembrane region" description="Helical; Name=6" evidence="1">
    <location>
        <begin position="285"/>
        <end position="305"/>
    </location>
</feature>
<feature type="topological domain" description="Cytoplasmic" evidence="1">
    <location>
        <begin position="306"/>
        <end position="317"/>
    </location>
</feature>
<feature type="transmembrane region" description="Helical; Name=7" evidence="1">
    <location>
        <begin position="318"/>
        <end position="338"/>
    </location>
</feature>
<feature type="topological domain" description="Extracellular" evidence="1">
    <location>
        <begin position="339"/>
        <end position="417"/>
    </location>
</feature>
<feature type="glycosylation site" description="N-linked (GlcNAc...) asparagine" evidence="1">
    <location>
        <position position="112"/>
    </location>
</feature>
<feature type="sequence conflict" description="In Ref. 3; AAR01130/AAR01131/AAR01132." evidence="5" ref="3">
    <original>M</original>
    <variation>V</variation>
    <location>
        <position position="55"/>
    </location>
</feature>
<feature type="sequence conflict" description="In Ref. 3; AAR01130/AAR01131/AAR01132." evidence="5" ref="3">
    <original>Q</original>
    <variation>R</variation>
    <location>
        <position position="129"/>
    </location>
</feature>
<feature type="sequence conflict" description="In Ref. 3; AAR01130/AAR01131/AAR01132." evidence="5" ref="3">
    <original>H</original>
    <variation>R</variation>
    <location>
        <position position="176"/>
    </location>
</feature>